<sequence length="602" mass="67545">MKEYKLENIRNFSIIAHIDHGKSTIADRLLESTSTVEQREMREQLLDSMDLERERGITIKAHPVTMYYKYNGEVYQLNLIDTPGHVDFSYEVSRSLTACEGALLIVDAAQGVQAQSLANVYLALERDLEIIPILNKIDLPAANPEKIRKQIEDYIGLDTTHAIACSAKTGEGISEILEAIVELIPPPKSPEETELKALIFDSHYDPYVGIMVYVRVMSGEIKKGDRITFMATKGSSFEVLGVGAFLPEATLIEGSLRAGQVGYFIANLKKVKDVKIGDTVTTVKHSAKVPLEGFKEINPVMFAGIYPIDSSDFDALKDALSRLQLNDSALTIEQESSHSLGFGFRCGFLGLLHLEIVFERIIREFDLDIIATAPSVIYKVVLKNGKTLFIDNPTAYPDPSIIEHMEEPWVHVNIITPQEYLSSIMNLCLDKRGVCLKTEMLDQHRLVLSYDLPLNEIVSDFNDKLKSVTKGYGSFDYRLGDYRKGSIIKLEILINDEPVDAFSCLVHRDKAEARGRSICEKLVGVIPQQLFKIPIQAAINKKVIARETIRALSKNVTAKCYGGDITRKRKLWEKQKKGKKRMKEFGKVSIPNTAFIEVLKID</sequence>
<reference key="1">
    <citation type="journal article" date="2005" name="Genome Res.">
        <title>The Chlamydophila abortus genome sequence reveals an array of variable proteins that contribute to interspecies variation.</title>
        <authorList>
            <person name="Thomson N.R."/>
            <person name="Yeats C."/>
            <person name="Bell K."/>
            <person name="Holden M.T.G."/>
            <person name="Bentley S.D."/>
            <person name="Livingstone M."/>
            <person name="Cerdeno-Tarraga A.-M."/>
            <person name="Harris B."/>
            <person name="Doggett J."/>
            <person name="Ormond D."/>
            <person name="Mungall K."/>
            <person name="Clarke K."/>
            <person name="Feltwell T."/>
            <person name="Hance Z."/>
            <person name="Sanders M."/>
            <person name="Quail M.A."/>
            <person name="Price C."/>
            <person name="Barrell B.G."/>
            <person name="Parkhill J."/>
            <person name="Longbottom D."/>
        </authorList>
    </citation>
    <scope>NUCLEOTIDE SEQUENCE [LARGE SCALE GENOMIC DNA]</scope>
    <source>
        <strain>DSM 27085 / S26/3</strain>
    </source>
</reference>
<protein>
    <recommendedName>
        <fullName evidence="1">Elongation factor 4</fullName>
        <shortName evidence="1">EF-4</shortName>
        <ecNumber evidence="1">3.6.5.n1</ecNumber>
    </recommendedName>
    <alternativeName>
        <fullName evidence="1">Ribosomal back-translocase LepA</fullName>
    </alternativeName>
</protein>
<feature type="chain" id="PRO_0000224751" description="Elongation factor 4">
    <location>
        <begin position="1"/>
        <end position="602"/>
    </location>
</feature>
<feature type="domain" description="tr-type G">
    <location>
        <begin position="7"/>
        <end position="188"/>
    </location>
</feature>
<feature type="binding site" evidence="1">
    <location>
        <begin position="19"/>
        <end position="24"/>
    </location>
    <ligand>
        <name>GTP</name>
        <dbReference type="ChEBI" id="CHEBI:37565"/>
    </ligand>
</feature>
<feature type="binding site" evidence="1">
    <location>
        <begin position="135"/>
        <end position="138"/>
    </location>
    <ligand>
        <name>GTP</name>
        <dbReference type="ChEBI" id="CHEBI:37565"/>
    </ligand>
</feature>
<proteinExistence type="inferred from homology"/>
<comment type="function">
    <text evidence="1">Required for accurate and efficient protein synthesis under certain stress conditions. May act as a fidelity factor of the translation reaction, by catalyzing a one-codon backward translocation of tRNAs on improperly translocated ribosomes. Back-translocation proceeds from a post-translocation (POST) complex to a pre-translocation (PRE) complex, thus giving elongation factor G a second chance to translocate the tRNAs correctly. Binds to ribosomes in a GTP-dependent manner.</text>
</comment>
<comment type="catalytic activity">
    <reaction evidence="1">
        <text>GTP + H2O = GDP + phosphate + H(+)</text>
        <dbReference type="Rhea" id="RHEA:19669"/>
        <dbReference type="ChEBI" id="CHEBI:15377"/>
        <dbReference type="ChEBI" id="CHEBI:15378"/>
        <dbReference type="ChEBI" id="CHEBI:37565"/>
        <dbReference type="ChEBI" id="CHEBI:43474"/>
        <dbReference type="ChEBI" id="CHEBI:58189"/>
        <dbReference type="EC" id="3.6.5.n1"/>
    </reaction>
</comment>
<comment type="subcellular location">
    <subcellularLocation>
        <location evidence="1">Cell inner membrane</location>
        <topology evidence="1">Peripheral membrane protein</topology>
        <orientation evidence="1">Cytoplasmic side</orientation>
    </subcellularLocation>
</comment>
<comment type="similarity">
    <text evidence="1">Belongs to the TRAFAC class translation factor GTPase superfamily. Classic translation factor GTPase family. LepA subfamily.</text>
</comment>
<accession>Q5L659</accession>
<gene>
    <name evidence="1" type="primary">lepA</name>
    <name type="ordered locus">CAB419</name>
</gene>
<evidence type="ECO:0000255" key="1">
    <source>
        <dbReference type="HAMAP-Rule" id="MF_00071"/>
    </source>
</evidence>
<keyword id="KW-0997">Cell inner membrane</keyword>
<keyword id="KW-1003">Cell membrane</keyword>
<keyword id="KW-0342">GTP-binding</keyword>
<keyword id="KW-0378">Hydrolase</keyword>
<keyword id="KW-0472">Membrane</keyword>
<keyword id="KW-0547">Nucleotide-binding</keyword>
<keyword id="KW-0648">Protein biosynthesis</keyword>
<dbReference type="EC" id="3.6.5.n1" evidence="1"/>
<dbReference type="EMBL" id="CR848038">
    <property type="protein sequence ID" value="CAH63872.1"/>
    <property type="molecule type" value="Genomic_DNA"/>
</dbReference>
<dbReference type="RefSeq" id="WP_011097056.1">
    <property type="nucleotide sequence ID" value="NC_004552.2"/>
</dbReference>
<dbReference type="SMR" id="Q5L659"/>
<dbReference type="KEGG" id="cab:CAB419"/>
<dbReference type="eggNOG" id="COG0481">
    <property type="taxonomic scope" value="Bacteria"/>
</dbReference>
<dbReference type="HOGENOM" id="CLU_009995_3_3_0"/>
<dbReference type="OrthoDB" id="9804431at2"/>
<dbReference type="Proteomes" id="UP000001012">
    <property type="component" value="Chromosome"/>
</dbReference>
<dbReference type="GO" id="GO:0005886">
    <property type="term" value="C:plasma membrane"/>
    <property type="evidence" value="ECO:0007669"/>
    <property type="project" value="UniProtKB-SubCell"/>
</dbReference>
<dbReference type="GO" id="GO:0005525">
    <property type="term" value="F:GTP binding"/>
    <property type="evidence" value="ECO:0007669"/>
    <property type="project" value="UniProtKB-UniRule"/>
</dbReference>
<dbReference type="GO" id="GO:0003924">
    <property type="term" value="F:GTPase activity"/>
    <property type="evidence" value="ECO:0007669"/>
    <property type="project" value="UniProtKB-UniRule"/>
</dbReference>
<dbReference type="GO" id="GO:0043022">
    <property type="term" value="F:ribosome binding"/>
    <property type="evidence" value="ECO:0007669"/>
    <property type="project" value="UniProtKB-UniRule"/>
</dbReference>
<dbReference type="GO" id="GO:0003746">
    <property type="term" value="F:translation elongation factor activity"/>
    <property type="evidence" value="ECO:0007669"/>
    <property type="project" value="UniProtKB-UniRule"/>
</dbReference>
<dbReference type="GO" id="GO:0045727">
    <property type="term" value="P:positive regulation of translation"/>
    <property type="evidence" value="ECO:0007669"/>
    <property type="project" value="UniProtKB-UniRule"/>
</dbReference>
<dbReference type="CDD" id="cd03699">
    <property type="entry name" value="EF4_II"/>
    <property type="match status" value="1"/>
</dbReference>
<dbReference type="CDD" id="cd16260">
    <property type="entry name" value="EF4_III"/>
    <property type="match status" value="1"/>
</dbReference>
<dbReference type="CDD" id="cd01890">
    <property type="entry name" value="LepA"/>
    <property type="match status" value="1"/>
</dbReference>
<dbReference type="CDD" id="cd03709">
    <property type="entry name" value="lepA_C"/>
    <property type="match status" value="1"/>
</dbReference>
<dbReference type="FunFam" id="3.40.50.300:FF:000078">
    <property type="entry name" value="Elongation factor 4"/>
    <property type="match status" value="1"/>
</dbReference>
<dbReference type="FunFam" id="2.40.30.10:FF:000015">
    <property type="entry name" value="Translation factor GUF1, mitochondrial"/>
    <property type="match status" value="1"/>
</dbReference>
<dbReference type="FunFam" id="3.30.70.240:FF:000007">
    <property type="entry name" value="Translation factor GUF1, mitochondrial"/>
    <property type="match status" value="1"/>
</dbReference>
<dbReference type="FunFam" id="3.30.70.2570:FF:000001">
    <property type="entry name" value="Translation factor GUF1, mitochondrial"/>
    <property type="match status" value="1"/>
</dbReference>
<dbReference type="FunFam" id="3.30.70.870:FF:000004">
    <property type="entry name" value="Translation factor GUF1, mitochondrial"/>
    <property type="match status" value="1"/>
</dbReference>
<dbReference type="Gene3D" id="3.30.70.240">
    <property type="match status" value="1"/>
</dbReference>
<dbReference type="Gene3D" id="3.30.70.2570">
    <property type="entry name" value="Elongation factor 4, C-terminal domain"/>
    <property type="match status" value="1"/>
</dbReference>
<dbReference type="Gene3D" id="3.30.70.870">
    <property type="entry name" value="Elongation Factor G (Translational Gtpase), domain 3"/>
    <property type="match status" value="1"/>
</dbReference>
<dbReference type="Gene3D" id="3.40.50.300">
    <property type="entry name" value="P-loop containing nucleotide triphosphate hydrolases"/>
    <property type="match status" value="1"/>
</dbReference>
<dbReference type="Gene3D" id="2.40.30.10">
    <property type="entry name" value="Translation factors"/>
    <property type="match status" value="1"/>
</dbReference>
<dbReference type="HAMAP" id="MF_00071">
    <property type="entry name" value="LepA"/>
    <property type="match status" value="1"/>
</dbReference>
<dbReference type="InterPro" id="IPR006297">
    <property type="entry name" value="EF-4"/>
</dbReference>
<dbReference type="InterPro" id="IPR035647">
    <property type="entry name" value="EFG_III/V"/>
</dbReference>
<dbReference type="InterPro" id="IPR000640">
    <property type="entry name" value="EFG_V-like"/>
</dbReference>
<dbReference type="InterPro" id="IPR004161">
    <property type="entry name" value="EFTu-like_2"/>
</dbReference>
<dbReference type="InterPro" id="IPR038363">
    <property type="entry name" value="LepA_C_sf"/>
</dbReference>
<dbReference type="InterPro" id="IPR013842">
    <property type="entry name" value="LepA_CTD"/>
</dbReference>
<dbReference type="InterPro" id="IPR035654">
    <property type="entry name" value="LepA_IV"/>
</dbReference>
<dbReference type="InterPro" id="IPR027417">
    <property type="entry name" value="P-loop_NTPase"/>
</dbReference>
<dbReference type="InterPro" id="IPR005225">
    <property type="entry name" value="Small_GTP-bd"/>
</dbReference>
<dbReference type="InterPro" id="IPR000795">
    <property type="entry name" value="T_Tr_GTP-bd_dom"/>
</dbReference>
<dbReference type="InterPro" id="IPR009000">
    <property type="entry name" value="Transl_B-barrel_sf"/>
</dbReference>
<dbReference type="NCBIfam" id="TIGR01393">
    <property type="entry name" value="lepA"/>
    <property type="match status" value="1"/>
</dbReference>
<dbReference type="NCBIfam" id="TIGR00231">
    <property type="entry name" value="small_GTP"/>
    <property type="match status" value="1"/>
</dbReference>
<dbReference type="PANTHER" id="PTHR43512:SF4">
    <property type="entry name" value="TRANSLATION FACTOR GUF1 HOMOLOG, CHLOROPLASTIC"/>
    <property type="match status" value="1"/>
</dbReference>
<dbReference type="PANTHER" id="PTHR43512">
    <property type="entry name" value="TRANSLATION FACTOR GUF1-RELATED"/>
    <property type="match status" value="1"/>
</dbReference>
<dbReference type="Pfam" id="PF00679">
    <property type="entry name" value="EFG_C"/>
    <property type="match status" value="1"/>
</dbReference>
<dbReference type="Pfam" id="PF00009">
    <property type="entry name" value="GTP_EFTU"/>
    <property type="match status" value="1"/>
</dbReference>
<dbReference type="Pfam" id="PF03144">
    <property type="entry name" value="GTP_EFTU_D2"/>
    <property type="match status" value="1"/>
</dbReference>
<dbReference type="Pfam" id="PF06421">
    <property type="entry name" value="LepA_C"/>
    <property type="match status" value="1"/>
</dbReference>
<dbReference type="PRINTS" id="PR00315">
    <property type="entry name" value="ELONGATNFCT"/>
</dbReference>
<dbReference type="SUPFAM" id="SSF54980">
    <property type="entry name" value="EF-G C-terminal domain-like"/>
    <property type="match status" value="2"/>
</dbReference>
<dbReference type="SUPFAM" id="SSF52540">
    <property type="entry name" value="P-loop containing nucleoside triphosphate hydrolases"/>
    <property type="match status" value="1"/>
</dbReference>
<dbReference type="SUPFAM" id="SSF50447">
    <property type="entry name" value="Translation proteins"/>
    <property type="match status" value="1"/>
</dbReference>
<dbReference type="PROSITE" id="PS51722">
    <property type="entry name" value="G_TR_2"/>
    <property type="match status" value="1"/>
</dbReference>
<organism>
    <name type="scientific">Chlamydia abortus (strain DSM 27085 / S26/3)</name>
    <name type="common">Chlamydophila abortus</name>
    <dbReference type="NCBI Taxonomy" id="218497"/>
    <lineage>
        <taxon>Bacteria</taxon>
        <taxon>Pseudomonadati</taxon>
        <taxon>Chlamydiota</taxon>
        <taxon>Chlamydiia</taxon>
        <taxon>Chlamydiales</taxon>
        <taxon>Chlamydiaceae</taxon>
        <taxon>Chlamydia/Chlamydophila group</taxon>
        <taxon>Chlamydia</taxon>
    </lineage>
</organism>
<name>LEPA_CHLAB</name>